<dbReference type="EC" id="2.7.7.24" evidence="1"/>
<dbReference type="EMBL" id="X60665">
    <property type="protein sequence ID" value="CAA43074.1"/>
    <property type="molecule type" value="Genomic_DNA"/>
</dbReference>
<dbReference type="PIR" id="S23342">
    <property type="entry name" value="S23342"/>
</dbReference>
<dbReference type="RefSeq" id="WP_023243995.1">
    <property type="nucleotide sequence ID" value="NZ_WHYQ01000001.1"/>
</dbReference>
<dbReference type="SMR" id="P55254"/>
<dbReference type="PATRIC" id="fig|58712.10.peg.2179"/>
<dbReference type="UniPathway" id="UPA00124"/>
<dbReference type="UniPathway" id="UPA00281"/>
<dbReference type="GO" id="GO:0008879">
    <property type="term" value="F:glucose-1-phosphate thymidylyltransferase activity"/>
    <property type="evidence" value="ECO:0007669"/>
    <property type="project" value="UniProtKB-EC"/>
</dbReference>
<dbReference type="GO" id="GO:0046872">
    <property type="term" value="F:metal ion binding"/>
    <property type="evidence" value="ECO:0007669"/>
    <property type="project" value="UniProtKB-KW"/>
</dbReference>
<dbReference type="GO" id="GO:0019305">
    <property type="term" value="P:dTDP-rhamnose biosynthetic process"/>
    <property type="evidence" value="ECO:0007669"/>
    <property type="project" value="UniProtKB-UniPathway"/>
</dbReference>
<dbReference type="GO" id="GO:0009243">
    <property type="term" value="P:O antigen biosynthetic process"/>
    <property type="evidence" value="ECO:0007669"/>
    <property type="project" value="UniProtKB-UniPathway"/>
</dbReference>
<dbReference type="CDD" id="cd02538">
    <property type="entry name" value="G1P_TT_short"/>
    <property type="match status" value="1"/>
</dbReference>
<dbReference type="FunFam" id="3.90.550.10:FF:000023">
    <property type="entry name" value="Glucose-1-phosphate thymidylyltransferase"/>
    <property type="match status" value="1"/>
</dbReference>
<dbReference type="Gene3D" id="3.90.550.10">
    <property type="entry name" value="Spore Coat Polysaccharide Biosynthesis Protein SpsA, Chain A"/>
    <property type="match status" value="1"/>
</dbReference>
<dbReference type="InterPro" id="IPR005907">
    <property type="entry name" value="G1P_thy_trans_s"/>
</dbReference>
<dbReference type="InterPro" id="IPR005835">
    <property type="entry name" value="NTP_transferase_dom"/>
</dbReference>
<dbReference type="InterPro" id="IPR029044">
    <property type="entry name" value="Nucleotide-diphossugar_trans"/>
</dbReference>
<dbReference type="NCBIfam" id="NF012024">
    <property type="entry name" value="PRK15480.1"/>
    <property type="match status" value="1"/>
</dbReference>
<dbReference type="NCBIfam" id="TIGR01207">
    <property type="entry name" value="rmlA"/>
    <property type="match status" value="1"/>
</dbReference>
<dbReference type="PANTHER" id="PTHR43532">
    <property type="entry name" value="GLUCOSE-1-PHOSPHATE THYMIDYLYLTRANSFERASE"/>
    <property type="match status" value="1"/>
</dbReference>
<dbReference type="PANTHER" id="PTHR43532:SF1">
    <property type="entry name" value="GLUCOSE-1-PHOSPHATE THYMIDYLYLTRANSFERASE 1"/>
    <property type="match status" value="1"/>
</dbReference>
<dbReference type="Pfam" id="PF00483">
    <property type="entry name" value="NTP_transferase"/>
    <property type="match status" value="1"/>
</dbReference>
<dbReference type="SUPFAM" id="SSF53448">
    <property type="entry name" value="Nucleotide-diphospho-sugar transferases"/>
    <property type="match status" value="1"/>
</dbReference>
<evidence type="ECO:0000250" key="1">
    <source>
        <dbReference type="UniProtKB" id="P61887"/>
    </source>
</evidence>
<evidence type="ECO:0000305" key="2"/>
<feature type="chain" id="PRO_0000207994" description="Glucose-1-phosphate thymidylyltransferase">
    <location>
        <begin position="1"/>
        <end position="292"/>
    </location>
</feature>
<feature type="binding site" evidence="1">
    <location>
        <position position="111"/>
    </location>
    <ligand>
        <name>Mg(2+)</name>
        <dbReference type="ChEBI" id="CHEBI:18420"/>
    </ligand>
</feature>
<feature type="binding site" evidence="1">
    <location>
        <position position="226"/>
    </location>
    <ligand>
        <name>Mg(2+)</name>
        <dbReference type="ChEBI" id="CHEBI:18420"/>
    </ligand>
</feature>
<organism>
    <name type="scientific">Salmonella anatum</name>
    <dbReference type="NCBI Taxonomy" id="58712"/>
    <lineage>
        <taxon>Bacteria</taxon>
        <taxon>Pseudomonadati</taxon>
        <taxon>Pseudomonadota</taxon>
        <taxon>Gammaproteobacteria</taxon>
        <taxon>Enterobacterales</taxon>
        <taxon>Enterobacteriaceae</taxon>
        <taxon>Salmonella</taxon>
    </lineage>
</organism>
<comment type="function">
    <text evidence="1">Catalyzes the formation of dTDP-glucose, from dTTP and glucose 1-phosphate, as well as its pyrophosphorolysis.</text>
</comment>
<comment type="catalytic activity">
    <reaction evidence="1">
        <text>dTTP + alpha-D-glucose 1-phosphate + H(+) = dTDP-alpha-D-glucose + diphosphate</text>
        <dbReference type="Rhea" id="RHEA:15225"/>
        <dbReference type="ChEBI" id="CHEBI:15378"/>
        <dbReference type="ChEBI" id="CHEBI:33019"/>
        <dbReference type="ChEBI" id="CHEBI:37568"/>
        <dbReference type="ChEBI" id="CHEBI:57477"/>
        <dbReference type="ChEBI" id="CHEBI:58601"/>
        <dbReference type="EC" id="2.7.7.24"/>
    </reaction>
</comment>
<comment type="cofactor">
    <cofactor evidence="1">
        <name>Mg(2+)</name>
        <dbReference type="ChEBI" id="CHEBI:18420"/>
    </cofactor>
    <text evidence="1">Binds 1 Mg(2+) ion per subunit.</text>
</comment>
<comment type="pathway">
    <text>Carbohydrate biosynthesis; dTDP-L-rhamnose biosynthesis.</text>
</comment>
<comment type="pathway">
    <text>Bacterial outer membrane biogenesis; LPS O-antigen biosynthesis.</text>
</comment>
<comment type="subunit">
    <text evidence="1">Homotetramer.</text>
</comment>
<comment type="similarity">
    <text evidence="2">Belongs to the glucose-1-phosphate thymidylyltransferase family.</text>
</comment>
<reference key="1">
    <citation type="journal article" date="1992" name="Genetics">
        <title>Molecular analysis of a Salmonella enterica group E1 rfb gene cluster: O antigen and the genetic basis of the major polymorphism.</title>
        <authorList>
            <person name="Wang L."/>
            <person name="Romana L.K."/>
            <person name="Reeves P.R."/>
        </authorList>
    </citation>
    <scope>NUCLEOTIDE SEQUENCE [GENOMIC DNA]</scope>
    <source>
        <strain>M32 / Group E1</strain>
    </source>
</reference>
<reference key="2">
    <citation type="journal article" date="1993" name="J. Bacteriol.">
        <title>Glycosyl transferases of O-antigen biosynthesis in Salmonella enterica: identification and characterization of transferase genes of groups B, C2, and E1.</title>
        <authorList>
            <person name="Liu D."/>
            <person name="Haase A.M."/>
            <person name="Lindqvist L."/>
            <person name="Lindberg A.A."/>
            <person name="Reeves P.R."/>
        </authorList>
    </citation>
    <scope>NUCLEOTIDE SEQUENCE [GENOMIC DNA]</scope>
    <source>
        <strain>M32 / Group E1</strain>
    </source>
</reference>
<name>RMLA_SALAN</name>
<sequence>MKTRKGIILAGGSGTRLYPVTMAVSKQLLPIYDKPMIYYPLSTLMLAGIRDILIISTPQDTPRFQQLLGDGSQWGLNLQYKVQPSPDGLAQAFIIGEEFIGNDDCALVLGDNIFYGHDLPKLMEAAVNKESGATVFAYHVNDPERYGVVEFDQSGTAVSLEEKPLQPKSNYAVTGLYFYDNSVVEMAKNLKPSARGELEITDINRIYMEQGRLSVAMMGRGYAWLDTGTHQSLIEASNFIATIEERQGLKVSCPEEIAYRKGFIDAEQIKNLAKPLSKNAYGQYLLNMIKGY</sequence>
<gene>
    <name type="primary">rmlA</name>
    <name type="synonym">rfbA</name>
</gene>
<protein>
    <recommendedName>
        <fullName>Glucose-1-phosphate thymidylyltransferase</fullName>
        <ecNumber evidence="1">2.7.7.24</ecNumber>
    </recommendedName>
    <alternativeName>
        <fullName>dTDP-glucose pyrophosphorylase</fullName>
    </alternativeName>
    <alternativeName>
        <fullName>dTDP-glucose synthase</fullName>
    </alternativeName>
</protein>
<accession>P55254</accession>
<proteinExistence type="inferred from homology"/>
<keyword id="KW-0448">Lipopolysaccharide biosynthesis</keyword>
<keyword id="KW-0460">Magnesium</keyword>
<keyword id="KW-0479">Metal-binding</keyword>
<keyword id="KW-0548">Nucleotidyltransferase</keyword>
<keyword id="KW-0808">Transferase</keyword>